<protein>
    <recommendedName>
        <fullName evidence="1">Translation initiation factor IF-1</fullName>
    </recommendedName>
</protein>
<accession>Q0SQG8</accession>
<sequence>MSKSDIIEMQGTVLEALPNAMFEVELESGHKILAHISGKLRMNFIRILPGDKVTVELSPYDLTRGRITWRAK</sequence>
<evidence type="ECO:0000255" key="1">
    <source>
        <dbReference type="HAMAP-Rule" id="MF_00075"/>
    </source>
</evidence>
<organism>
    <name type="scientific">Clostridium perfringens (strain SM101 / Type A)</name>
    <dbReference type="NCBI Taxonomy" id="289380"/>
    <lineage>
        <taxon>Bacteria</taxon>
        <taxon>Bacillati</taxon>
        <taxon>Bacillota</taxon>
        <taxon>Clostridia</taxon>
        <taxon>Eubacteriales</taxon>
        <taxon>Clostridiaceae</taxon>
        <taxon>Clostridium</taxon>
    </lineage>
</organism>
<reference key="1">
    <citation type="journal article" date="2006" name="Genome Res.">
        <title>Skewed genomic variability in strains of the toxigenic bacterial pathogen, Clostridium perfringens.</title>
        <authorList>
            <person name="Myers G.S.A."/>
            <person name="Rasko D.A."/>
            <person name="Cheung J.K."/>
            <person name="Ravel J."/>
            <person name="Seshadri R."/>
            <person name="DeBoy R.T."/>
            <person name="Ren Q."/>
            <person name="Varga J."/>
            <person name="Awad M.M."/>
            <person name="Brinkac L.M."/>
            <person name="Daugherty S.C."/>
            <person name="Haft D.H."/>
            <person name="Dodson R.J."/>
            <person name="Madupu R."/>
            <person name="Nelson W.C."/>
            <person name="Rosovitz M.J."/>
            <person name="Sullivan S.A."/>
            <person name="Khouri H."/>
            <person name="Dimitrov G.I."/>
            <person name="Watkins K.L."/>
            <person name="Mulligan S."/>
            <person name="Benton J."/>
            <person name="Radune D."/>
            <person name="Fisher D.J."/>
            <person name="Atkins H.S."/>
            <person name="Hiscox T."/>
            <person name="Jost B.H."/>
            <person name="Billington S.J."/>
            <person name="Songer J.G."/>
            <person name="McClane B.A."/>
            <person name="Titball R.W."/>
            <person name="Rood J.I."/>
            <person name="Melville S.B."/>
            <person name="Paulsen I.T."/>
        </authorList>
    </citation>
    <scope>NUCLEOTIDE SEQUENCE [LARGE SCALE GENOMIC DNA]</scope>
    <source>
        <strain>SM101 / Type A</strain>
    </source>
</reference>
<dbReference type="EMBL" id="CP000312">
    <property type="protein sequence ID" value="ABG86246.1"/>
    <property type="molecule type" value="Genomic_DNA"/>
</dbReference>
<dbReference type="RefSeq" id="WP_003454491.1">
    <property type="nucleotide sequence ID" value="NZ_CAXVKH010000004.1"/>
</dbReference>
<dbReference type="SMR" id="Q0SQG8"/>
<dbReference type="GeneID" id="93001033"/>
<dbReference type="KEGG" id="cpr:CPR_2375"/>
<dbReference type="Proteomes" id="UP000001824">
    <property type="component" value="Chromosome"/>
</dbReference>
<dbReference type="GO" id="GO:0005829">
    <property type="term" value="C:cytosol"/>
    <property type="evidence" value="ECO:0007669"/>
    <property type="project" value="TreeGrafter"/>
</dbReference>
<dbReference type="GO" id="GO:0043022">
    <property type="term" value="F:ribosome binding"/>
    <property type="evidence" value="ECO:0007669"/>
    <property type="project" value="UniProtKB-UniRule"/>
</dbReference>
<dbReference type="GO" id="GO:0019843">
    <property type="term" value="F:rRNA binding"/>
    <property type="evidence" value="ECO:0007669"/>
    <property type="project" value="UniProtKB-UniRule"/>
</dbReference>
<dbReference type="GO" id="GO:0003743">
    <property type="term" value="F:translation initiation factor activity"/>
    <property type="evidence" value="ECO:0007669"/>
    <property type="project" value="UniProtKB-UniRule"/>
</dbReference>
<dbReference type="CDD" id="cd04451">
    <property type="entry name" value="S1_IF1"/>
    <property type="match status" value="1"/>
</dbReference>
<dbReference type="FunFam" id="2.40.50.140:FF:000002">
    <property type="entry name" value="Translation initiation factor IF-1"/>
    <property type="match status" value="1"/>
</dbReference>
<dbReference type="Gene3D" id="2.40.50.140">
    <property type="entry name" value="Nucleic acid-binding proteins"/>
    <property type="match status" value="1"/>
</dbReference>
<dbReference type="HAMAP" id="MF_00075">
    <property type="entry name" value="IF_1"/>
    <property type="match status" value="1"/>
</dbReference>
<dbReference type="InterPro" id="IPR012340">
    <property type="entry name" value="NA-bd_OB-fold"/>
</dbReference>
<dbReference type="InterPro" id="IPR006196">
    <property type="entry name" value="RNA-binding_domain_S1_IF1"/>
</dbReference>
<dbReference type="InterPro" id="IPR003029">
    <property type="entry name" value="S1_domain"/>
</dbReference>
<dbReference type="InterPro" id="IPR004368">
    <property type="entry name" value="TIF_IF1"/>
</dbReference>
<dbReference type="NCBIfam" id="TIGR00008">
    <property type="entry name" value="infA"/>
    <property type="match status" value="1"/>
</dbReference>
<dbReference type="PANTHER" id="PTHR33370">
    <property type="entry name" value="TRANSLATION INITIATION FACTOR IF-1, CHLOROPLASTIC"/>
    <property type="match status" value="1"/>
</dbReference>
<dbReference type="PANTHER" id="PTHR33370:SF1">
    <property type="entry name" value="TRANSLATION INITIATION FACTOR IF-1, CHLOROPLASTIC"/>
    <property type="match status" value="1"/>
</dbReference>
<dbReference type="Pfam" id="PF01176">
    <property type="entry name" value="eIF-1a"/>
    <property type="match status" value="1"/>
</dbReference>
<dbReference type="SMART" id="SM00316">
    <property type="entry name" value="S1"/>
    <property type="match status" value="1"/>
</dbReference>
<dbReference type="SUPFAM" id="SSF50249">
    <property type="entry name" value="Nucleic acid-binding proteins"/>
    <property type="match status" value="1"/>
</dbReference>
<dbReference type="PROSITE" id="PS50832">
    <property type="entry name" value="S1_IF1_TYPE"/>
    <property type="match status" value="1"/>
</dbReference>
<name>IF1_CLOPS</name>
<keyword id="KW-0963">Cytoplasm</keyword>
<keyword id="KW-0396">Initiation factor</keyword>
<keyword id="KW-0648">Protein biosynthesis</keyword>
<keyword id="KW-0694">RNA-binding</keyword>
<keyword id="KW-0699">rRNA-binding</keyword>
<gene>
    <name evidence="1" type="primary">infA</name>
    <name type="ordered locus">CPR_2375</name>
</gene>
<proteinExistence type="inferred from homology"/>
<comment type="function">
    <text evidence="1">One of the essential components for the initiation of protein synthesis. Stabilizes the binding of IF-2 and IF-3 on the 30S subunit to which N-formylmethionyl-tRNA(fMet) subsequently binds. Helps modulate mRNA selection, yielding the 30S pre-initiation complex (PIC). Upon addition of the 50S ribosomal subunit IF-1, IF-2 and IF-3 are released leaving the mature 70S translation initiation complex.</text>
</comment>
<comment type="subunit">
    <text evidence="1">Component of the 30S ribosomal translation pre-initiation complex which assembles on the 30S ribosome in the order IF-2 and IF-3, IF-1 and N-formylmethionyl-tRNA(fMet); mRNA recruitment can occur at any time during PIC assembly.</text>
</comment>
<comment type="subcellular location">
    <subcellularLocation>
        <location evidence="1">Cytoplasm</location>
    </subcellularLocation>
</comment>
<comment type="similarity">
    <text evidence="1">Belongs to the IF-1 family.</text>
</comment>
<feature type="chain" id="PRO_0000263787" description="Translation initiation factor IF-1">
    <location>
        <begin position="1"/>
        <end position="72"/>
    </location>
</feature>
<feature type="domain" description="S1-like" evidence="1">
    <location>
        <begin position="1"/>
        <end position="72"/>
    </location>
</feature>